<gene>
    <name evidence="5" type="primary">ANKRD37</name>
    <name evidence="3" type="synonym">LPR2BP</name>
</gene>
<feature type="chain" id="PRO_0000244361" description="Ankyrin repeat domain-containing protein 37">
    <location>
        <begin position="1"/>
        <end position="158"/>
    </location>
</feature>
<feature type="repeat" description="ANK 1">
    <location>
        <begin position="1"/>
        <end position="25"/>
    </location>
</feature>
<feature type="repeat" description="ANK 2">
    <location>
        <begin position="30"/>
        <end position="59"/>
    </location>
</feature>
<feature type="repeat" description="ANK 3">
    <location>
        <begin position="63"/>
        <end position="92"/>
    </location>
</feature>
<feature type="short sequence motif" description="Nuclear localization signal" evidence="1">
    <location>
        <begin position="129"/>
        <end position="149"/>
    </location>
</feature>
<feature type="sequence variant" id="VAR_048279" description="In dbSNP:rs4317244.">
    <original>T</original>
    <variation>S</variation>
    <location>
        <position position="152"/>
    </location>
</feature>
<dbReference type="EMBL" id="AY296056">
    <property type="protein sequence ID" value="AAP50252.1"/>
    <property type="molecule type" value="mRNA"/>
</dbReference>
<dbReference type="EMBL" id="BC088376">
    <property type="protein sequence ID" value="AAH88376.1"/>
    <property type="molecule type" value="mRNA"/>
</dbReference>
<dbReference type="CCDS" id="CCDS3841.1"/>
<dbReference type="RefSeq" id="NP_859077.1">
    <property type="nucleotide sequence ID" value="NM_181726.4"/>
</dbReference>
<dbReference type="SMR" id="Q7Z713"/>
<dbReference type="BioGRID" id="131683">
    <property type="interactions" value="3"/>
</dbReference>
<dbReference type="FunCoup" id="Q7Z713">
    <property type="interactions" value="752"/>
</dbReference>
<dbReference type="IntAct" id="Q7Z713">
    <property type="interactions" value="2"/>
</dbReference>
<dbReference type="STRING" id="9606.ENSP00000335147"/>
<dbReference type="iPTMnet" id="Q7Z713"/>
<dbReference type="PhosphoSitePlus" id="Q7Z713"/>
<dbReference type="BioMuta" id="ANKRD37"/>
<dbReference type="DMDM" id="74750211"/>
<dbReference type="MassIVE" id="Q7Z713"/>
<dbReference type="PaxDb" id="9606-ENSP00000335147"/>
<dbReference type="PeptideAtlas" id="Q7Z713"/>
<dbReference type="Antibodypedia" id="52255">
    <property type="antibodies" value="106 antibodies from 19 providers"/>
</dbReference>
<dbReference type="DNASU" id="353322"/>
<dbReference type="Ensembl" id="ENST00000335174.6">
    <property type="protein sequence ID" value="ENSP00000335147.4"/>
    <property type="gene ID" value="ENSG00000186352.9"/>
</dbReference>
<dbReference type="GeneID" id="353322"/>
<dbReference type="KEGG" id="hsa:353322"/>
<dbReference type="MANE-Select" id="ENST00000335174.6">
    <property type="protein sequence ID" value="ENSP00000335147.4"/>
    <property type="RefSeq nucleotide sequence ID" value="NM_181726.4"/>
    <property type="RefSeq protein sequence ID" value="NP_859077.1"/>
</dbReference>
<dbReference type="UCSC" id="uc003ixm.4">
    <property type="organism name" value="human"/>
</dbReference>
<dbReference type="AGR" id="HGNC:29593"/>
<dbReference type="CTD" id="353322"/>
<dbReference type="DisGeNET" id="353322"/>
<dbReference type="GeneCards" id="ANKRD37"/>
<dbReference type="HGNC" id="HGNC:29593">
    <property type="gene designation" value="ANKRD37"/>
</dbReference>
<dbReference type="HPA" id="ENSG00000186352">
    <property type="expression patterns" value="Tissue enhanced (choroid plexus, retina)"/>
</dbReference>
<dbReference type="MIM" id="619021">
    <property type="type" value="gene"/>
</dbReference>
<dbReference type="neXtProt" id="NX_Q7Z713"/>
<dbReference type="OpenTargets" id="ENSG00000186352"/>
<dbReference type="PharmGKB" id="PA142672604"/>
<dbReference type="VEuPathDB" id="HostDB:ENSG00000186352"/>
<dbReference type="eggNOG" id="KOG0504">
    <property type="taxonomic scope" value="Eukaryota"/>
</dbReference>
<dbReference type="GeneTree" id="ENSGT00940000154216"/>
<dbReference type="HOGENOM" id="CLU_000134_42_0_1"/>
<dbReference type="InParanoid" id="Q7Z713"/>
<dbReference type="OMA" id="CNPEADG"/>
<dbReference type="OrthoDB" id="5402602at2759"/>
<dbReference type="PAN-GO" id="Q7Z713">
    <property type="GO annotations" value="2 GO annotations based on evolutionary models"/>
</dbReference>
<dbReference type="PhylomeDB" id="Q7Z713"/>
<dbReference type="TreeFam" id="TF338463"/>
<dbReference type="PathwayCommons" id="Q7Z713"/>
<dbReference type="SignaLink" id="Q7Z713"/>
<dbReference type="BioGRID-ORCS" id="353322">
    <property type="hits" value="13 hits in 1156 CRISPR screens"/>
</dbReference>
<dbReference type="ChiTaRS" id="ANKRD37">
    <property type="organism name" value="human"/>
</dbReference>
<dbReference type="GenomeRNAi" id="353322"/>
<dbReference type="Pharos" id="Q7Z713">
    <property type="development level" value="Tbio"/>
</dbReference>
<dbReference type="PRO" id="PR:Q7Z713"/>
<dbReference type="Proteomes" id="UP000005640">
    <property type="component" value="Chromosome 4"/>
</dbReference>
<dbReference type="RNAct" id="Q7Z713">
    <property type="molecule type" value="protein"/>
</dbReference>
<dbReference type="Bgee" id="ENSG00000186352">
    <property type="expression patterns" value="Expressed in lower esophagus mucosa and 178 other cell types or tissues"/>
</dbReference>
<dbReference type="ExpressionAtlas" id="Q7Z713">
    <property type="expression patterns" value="baseline and differential"/>
</dbReference>
<dbReference type="GO" id="GO:0005737">
    <property type="term" value="C:cytoplasm"/>
    <property type="evidence" value="ECO:0000318"/>
    <property type="project" value="GO_Central"/>
</dbReference>
<dbReference type="GO" id="GO:0005829">
    <property type="term" value="C:cytosol"/>
    <property type="evidence" value="ECO:0000314"/>
    <property type="project" value="HPA"/>
</dbReference>
<dbReference type="GO" id="GO:0001673">
    <property type="term" value="C:male germ cell nucleus"/>
    <property type="evidence" value="ECO:0007669"/>
    <property type="project" value="Ensembl"/>
</dbReference>
<dbReference type="GO" id="GO:0005739">
    <property type="term" value="C:mitochondrion"/>
    <property type="evidence" value="ECO:0000314"/>
    <property type="project" value="HPA"/>
</dbReference>
<dbReference type="GO" id="GO:0005654">
    <property type="term" value="C:nucleoplasm"/>
    <property type="evidence" value="ECO:0000314"/>
    <property type="project" value="HPA"/>
</dbReference>
<dbReference type="FunFam" id="1.25.40.20:FF:000234">
    <property type="entry name" value="ankyrin repeat domain-containing protein 37 isoform X2"/>
    <property type="match status" value="1"/>
</dbReference>
<dbReference type="Gene3D" id="1.25.40.20">
    <property type="entry name" value="Ankyrin repeat-containing domain"/>
    <property type="match status" value="1"/>
</dbReference>
<dbReference type="InterPro" id="IPR050776">
    <property type="entry name" value="Ank_Repeat/CDKN_Inhibitor"/>
</dbReference>
<dbReference type="InterPro" id="IPR002110">
    <property type="entry name" value="Ankyrin_rpt"/>
</dbReference>
<dbReference type="InterPro" id="IPR036770">
    <property type="entry name" value="Ankyrin_rpt-contain_sf"/>
</dbReference>
<dbReference type="PANTHER" id="PTHR24201">
    <property type="entry name" value="ANK_REP_REGION DOMAIN-CONTAINING PROTEIN"/>
    <property type="match status" value="1"/>
</dbReference>
<dbReference type="PANTHER" id="PTHR24201:SF0">
    <property type="entry name" value="ANKYRIN REPEAT DOMAIN-CONTAINING PROTEIN 37"/>
    <property type="match status" value="1"/>
</dbReference>
<dbReference type="Pfam" id="PF12796">
    <property type="entry name" value="Ank_2"/>
    <property type="match status" value="1"/>
</dbReference>
<dbReference type="SMART" id="SM00248">
    <property type="entry name" value="ANK"/>
    <property type="match status" value="3"/>
</dbReference>
<dbReference type="SUPFAM" id="SSF48403">
    <property type="entry name" value="Ankyrin repeat"/>
    <property type="match status" value="1"/>
</dbReference>
<dbReference type="PROSITE" id="PS50297">
    <property type="entry name" value="ANK_REP_REGION"/>
    <property type="match status" value="1"/>
</dbReference>
<dbReference type="PROSITE" id="PS50088">
    <property type="entry name" value="ANK_REPEAT"/>
    <property type="match status" value="1"/>
</dbReference>
<sequence length="158" mass="16872">MLLLDCNPEVDGLKHLLETGASVNAPPDPCKQSPVHLAAGSGLACFLLWQLQTGADLNQQDVLGEAPLHKAAKVGSLECLSLLVASDAQIDLCNKNGQTAEDLAWSCGFPDCAKFLTTIKCMQTIKASEHPDRNDCVAVLRQKRSLGSVENTSGKRKC</sequence>
<evidence type="ECO:0000250" key="1">
    <source>
        <dbReference type="UniProtKB" id="Q569N2"/>
    </source>
</evidence>
<evidence type="ECO:0000269" key="2">
    <source>
    </source>
</evidence>
<evidence type="ECO:0000303" key="3">
    <source>
    </source>
</evidence>
<evidence type="ECO:0000305" key="4"/>
<evidence type="ECO:0000312" key="5">
    <source>
        <dbReference type="HGNC" id="HGNC:29593"/>
    </source>
</evidence>
<protein>
    <recommendedName>
        <fullName evidence="4">Ankyrin repeat domain-containing protein 37</fullName>
    </recommendedName>
    <alternativeName>
        <fullName evidence="3">Low-density lipoprotein receptor-related protein 2-binding protein</fullName>
        <shortName evidence="3">hLrp2bp</shortName>
    </alternativeName>
</protein>
<accession>Q7Z713</accession>
<organism>
    <name type="scientific">Homo sapiens</name>
    <name type="common">Human</name>
    <dbReference type="NCBI Taxonomy" id="9606"/>
    <lineage>
        <taxon>Eukaryota</taxon>
        <taxon>Metazoa</taxon>
        <taxon>Chordata</taxon>
        <taxon>Craniata</taxon>
        <taxon>Vertebrata</taxon>
        <taxon>Euteleostomi</taxon>
        <taxon>Mammalia</taxon>
        <taxon>Eutheria</taxon>
        <taxon>Euarchontoglires</taxon>
        <taxon>Primates</taxon>
        <taxon>Haplorrhini</taxon>
        <taxon>Catarrhini</taxon>
        <taxon>Hominidae</taxon>
        <taxon>Homo</taxon>
    </lineage>
</organism>
<keyword id="KW-0040">ANK repeat</keyword>
<keyword id="KW-0963">Cytoplasm</keyword>
<keyword id="KW-0539">Nucleus</keyword>
<keyword id="KW-1267">Proteomics identification</keyword>
<keyword id="KW-1185">Reference proteome</keyword>
<keyword id="KW-0677">Repeat</keyword>
<keyword id="KW-0832">Ubl conjugation</keyword>
<comment type="interaction">
    <interactant intactId="EBI-12373689">
        <id>Q7Z713</id>
    </interactant>
    <interactant intactId="EBI-745632">
        <id>Q9NWT6</id>
        <label>HIF1AN</label>
    </interactant>
    <organismsDiffer>false</organismsDiffer>
    <experiments>7</experiments>
</comment>
<comment type="interaction">
    <interactant intactId="EBI-12373689">
        <id>Q7Z713</id>
    </interactant>
    <interactant intactId="EBI-7254550">
        <id>P36508</id>
        <label>ZNF76</label>
    </interactant>
    <organismsDiffer>false</organismsDiffer>
    <experiments>3</experiments>
</comment>
<comment type="subcellular location">
    <subcellularLocation>
        <location evidence="2">Nucleus</location>
    </subcellularLocation>
    <subcellularLocation>
        <location evidence="2">Cytoplasm</location>
    </subcellularLocation>
</comment>
<comment type="tissue specificity">
    <text evidence="2">Mainly expressed in testis, small intestine, colon, blood leukocytes and in pancreatic adenocarcinoma cells.</text>
</comment>
<comment type="PTM">
    <text evidence="1">Ubiquitinated by the CRL2(FEM1B) complex, leading to its degradation.</text>
</comment>
<name>ANR37_HUMAN</name>
<reference key="1">
    <citation type="journal article" date="2005" name="Cell. Mol. Biol. Lett.">
        <title>Molecular cloning and characterization of a novel human gene containing 4 ankyrin repeat domains.</title>
        <authorList>
            <person name="Li J."/>
            <person name="Ji C."/>
            <person name="Zheng H."/>
            <person name="Fei X."/>
            <person name="Zheng M."/>
            <person name="Dai J."/>
            <person name="Gu S."/>
            <person name="Xie Y."/>
            <person name="Mao Y."/>
        </authorList>
    </citation>
    <scope>NUCLEOTIDE SEQUENCE [MRNA]</scope>
    <scope>TISSUE SPECIFICITY</scope>
    <scope>SUBCELLULAR LOCATION</scope>
    <source>
        <tissue>Brain</tissue>
    </source>
</reference>
<reference key="2">
    <citation type="journal article" date="2004" name="Genome Res.">
        <title>The status, quality, and expansion of the NIH full-length cDNA project: the Mammalian Gene Collection (MGC).</title>
        <authorList>
            <consortium name="The MGC Project Team"/>
        </authorList>
    </citation>
    <scope>NUCLEOTIDE SEQUENCE [LARGE SCALE MRNA]</scope>
    <source>
        <tissue>Testis</tissue>
    </source>
</reference>
<proteinExistence type="evidence at protein level"/>